<feature type="chain" id="PRO_0000136664" description="Tryptophan--tRNA ligase">
    <location>
        <begin position="1"/>
        <end position="449"/>
    </location>
</feature>
<feature type="short sequence motif" description="'HIGH' region" evidence="1">
    <location>
        <begin position="11"/>
        <end position="19"/>
    </location>
</feature>
<feature type="short sequence motif" description="'KMSKS' region" evidence="1">
    <location>
        <begin position="204"/>
        <end position="208"/>
    </location>
</feature>
<feature type="binding site" evidence="1">
    <location>
        <begin position="10"/>
        <end position="12"/>
    </location>
    <ligand>
        <name>ATP</name>
        <dbReference type="ChEBI" id="CHEBI:30616"/>
    </ligand>
</feature>
<feature type="binding site" evidence="1">
    <location>
        <begin position="18"/>
        <end position="19"/>
    </location>
    <ligand>
        <name>ATP</name>
        <dbReference type="ChEBI" id="CHEBI:30616"/>
    </ligand>
</feature>
<feature type="binding site" evidence="1">
    <location>
        <position position="143"/>
    </location>
    <ligand>
        <name>L-tryptophan</name>
        <dbReference type="ChEBI" id="CHEBI:57912"/>
    </ligand>
</feature>
<feature type="binding site" evidence="1">
    <location>
        <begin position="155"/>
        <end position="157"/>
    </location>
    <ligand>
        <name>ATP</name>
        <dbReference type="ChEBI" id="CHEBI:30616"/>
    </ligand>
</feature>
<feature type="binding site" evidence="1">
    <location>
        <position position="197"/>
    </location>
    <ligand>
        <name>ATP</name>
        <dbReference type="ChEBI" id="CHEBI:30616"/>
    </ligand>
</feature>
<feature type="binding site" evidence="1">
    <location>
        <begin position="204"/>
        <end position="208"/>
    </location>
    <ligand>
        <name>ATP</name>
        <dbReference type="ChEBI" id="CHEBI:30616"/>
    </ligand>
</feature>
<proteinExistence type="inferred from homology"/>
<sequence length="449" mass="49635">MTTRILTGITTTGTPHLGNYAGAIRPAIVASRQSDVDSFYFLADYHALIKCDDPLRIQRSRLEIAATWLAAGLDVDRVTFYRQSDIPEIPELTWLLTCVAAKGLLNRAHAYKASVDKNVESCEDPDAGITMGLYSYPVLMAADILMFNAHQVPVGRDQIQHVEMARDIGQRFNHLFGKGREFFVMPEALIEESVATLPGLDGRKMSKSYDNTIPLFSSAKDMKSAISRIVTDSLAPGEAKDPDNSHLFTLYQAFSTPEQCAQFRSELLQGLGWGEAKTRMFTLLDEQLGEAREQYLSLIERPADLEDILLAGAQKARRVATPFLEELREAVGLRSFRTAVQNADTGKKKTTKGARFVSFREDDGSFRFRLLAADGEQLLLSRTFADGKAAGIVSKQLQQGGELDLRSEADRFTLWLNGECVADSPVFADATARDNAVETLKLALAPQQD</sequence>
<name>SYW_PSESM</name>
<reference key="1">
    <citation type="journal article" date="2003" name="Proc. Natl. Acad. Sci. U.S.A.">
        <title>The complete genome sequence of the Arabidopsis and tomato pathogen Pseudomonas syringae pv. tomato DC3000.</title>
        <authorList>
            <person name="Buell C.R."/>
            <person name="Joardar V."/>
            <person name="Lindeberg M."/>
            <person name="Selengut J."/>
            <person name="Paulsen I.T."/>
            <person name="Gwinn M.L."/>
            <person name="Dodson R.J."/>
            <person name="DeBoy R.T."/>
            <person name="Durkin A.S."/>
            <person name="Kolonay J.F."/>
            <person name="Madupu R."/>
            <person name="Daugherty S.C."/>
            <person name="Brinkac L.M."/>
            <person name="Beanan M.J."/>
            <person name="Haft D.H."/>
            <person name="Nelson W.C."/>
            <person name="Davidsen T.M."/>
            <person name="Zafar N."/>
            <person name="Zhou L."/>
            <person name="Liu J."/>
            <person name="Yuan Q."/>
            <person name="Khouri H.M."/>
            <person name="Fedorova N.B."/>
            <person name="Tran B."/>
            <person name="Russell D."/>
            <person name="Berry K.J."/>
            <person name="Utterback T.R."/>
            <person name="Van Aken S.E."/>
            <person name="Feldblyum T.V."/>
            <person name="D'Ascenzo M."/>
            <person name="Deng W.-L."/>
            <person name="Ramos A.R."/>
            <person name="Alfano J.R."/>
            <person name="Cartinhour S."/>
            <person name="Chatterjee A.K."/>
            <person name="Delaney T.P."/>
            <person name="Lazarowitz S.G."/>
            <person name="Martin G.B."/>
            <person name="Schneider D.J."/>
            <person name="Tang X."/>
            <person name="Bender C.L."/>
            <person name="White O."/>
            <person name="Fraser C.M."/>
            <person name="Collmer A."/>
        </authorList>
    </citation>
    <scope>NUCLEOTIDE SEQUENCE [LARGE SCALE GENOMIC DNA]</scope>
    <source>
        <strain>ATCC BAA-871 / DC3000</strain>
    </source>
</reference>
<dbReference type="EC" id="6.1.1.2" evidence="1"/>
<dbReference type="EMBL" id="AE016853">
    <property type="protein sequence ID" value="AAO57878.1"/>
    <property type="molecule type" value="Genomic_DNA"/>
</dbReference>
<dbReference type="RefSeq" id="NP_794183.1">
    <property type="nucleotide sequence ID" value="NC_004578.1"/>
</dbReference>
<dbReference type="RefSeq" id="WP_005766542.1">
    <property type="nucleotide sequence ID" value="NC_004578.1"/>
</dbReference>
<dbReference type="SMR" id="Q87WW4"/>
<dbReference type="STRING" id="223283.PSPTO_4429"/>
<dbReference type="GeneID" id="1186110"/>
<dbReference type="KEGG" id="pst:PSPTO_4429"/>
<dbReference type="PATRIC" id="fig|223283.9.peg.4544"/>
<dbReference type="eggNOG" id="COG0180">
    <property type="taxonomic scope" value="Bacteria"/>
</dbReference>
<dbReference type="HOGENOM" id="CLU_029244_5_1_6"/>
<dbReference type="OrthoDB" id="9801042at2"/>
<dbReference type="PhylomeDB" id="Q87WW4"/>
<dbReference type="Proteomes" id="UP000002515">
    <property type="component" value="Chromosome"/>
</dbReference>
<dbReference type="GO" id="GO:0005829">
    <property type="term" value="C:cytosol"/>
    <property type="evidence" value="ECO:0007669"/>
    <property type="project" value="TreeGrafter"/>
</dbReference>
<dbReference type="GO" id="GO:0005524">
    <property type="term" value="F:ATP binding"/>
    <property type="evidence" value="ECO:0007669"/>
    <property type="project" value="UniProtKB-UniRule"/>
</dbReference>
<dbReference type="GO" id="GO:0004830">
    <property type="term" value="F:tryptophan-tRNA ligase activity"/>
    <property type="evidence" value="ECO:0007669"/>
    <property type="project" value="UniProtKB-UniRule"/>
</dbReference>
<dbReference type="GO" id="GO:0006436">
    <property type="term" value="P:tryptophanyl-tRNA aminoacylation"/>
    <property type="evidence" value="ECO:0007669"/>
    <property type="project" value="UniProtKB-UniRule"/>
</dbReference>
<dbReference type="FunFam" id="1.10.240.10:FF:000005">
    <property type="entry name" value="Tryptophan--tRNA ligase"/>
    <property type="match status" value="1"/>
</dbReference>
<dbReference type="FunFam" id="3.40.50.620:FF:000144">
    <property type="entry name" value="Tryptophan--tRNA ligase"/>
    <property type="match status" value="1"/>
</dbReference>
<dbReference type="Gene3D" id="2.30.29.80">
    <property type="match status" value="1"/>
</dbReference>
<dbReference type="Gene3D" id="3.40.50.620">
    <property type="entry name" value="HUPs"/>
    <property type="match status" value="1"/>
</dbReference>
<dbReference type="Gene3D" id="1.10.240.10">
    <property type="entry name" value="Tyrosyl-Transfer RNA Synthetase"/>
    <property type="match status" value="1"/>
</dbReference>
<dbReference type="HAMAP" id="MF_00140_B">
    <property type="entry name" value="Trp_tRNA_synth_B"/>
    <property type="match status" value="1"/>
</dbReference>
<dbReference type="InterPro" id="IPR002305">
    <property type="entry name" value="aa-tRNA-synth_Ic"/>
</dbReference>
<dbReference type="InterPro" id="IPR014729">
    <property type="entry name" value="Rossmann-like_a/b/a_fold"/>
</dbReference>
<dbReference type="InterPro" id="IPR002306">
    <property type="entry name" value="Trp-tRNA-ligase"/>
</dbReference>
<dbReference type="InterPro" id="IPR024109">
    <property type="entry name" value="Trp-tRNA-ligase_bac-type"/>
</dbReference>
<dbReference type="InterPro" id="IPR050203">
    <property type="entry name" value="Trp-tRNA_synthetase"/>
</dbReference>
<dbReference type="InterPro" id="IPR036913">
    <property type="entry name" value="YegP-like_sf"/>
</dbReference>
<dbReference type="NCBIfam" id="NF008923">
    <property type="entry name" value="PRK12284.1"/>
    <property type="match status" value="1"/>
</dbReference>
<dbReference type="NCBIfam" id="TIGR00233">
    <property type="entry name" value="trpS"/>
    <property type="match status" value="1"/>
</dbReference>
<dbReference type="PANTHER" id="PTHR43766">
    <property type="entry name" value="TRYPTOPHAN--TRNA LIGASE, MITOCHONDRIAL"/>
    <property type="match status" value="1"/>
</dbReference>
<dbReference type="PANTHER" id="PTHR43766:SF1">
    <property type="entry name" value="TRYPTOPHAN--TRNA LIGASE, MITOCHONDRIAL"/>
    <property type="match status" value="1"/>
</dbReference>
<dbReference type="Pfam" id="PF00579">
    <property type="entry name" value="tRNA-synt_1b"/>
    <property type="match status" value="1"/>
</dbReference>
<dbReference type="PRINTS" id="PR01039">
    <property type="entry name" value="TRNASYNTHTRP"/>
</dbReference>
<dbReference type="SUPFAM" id="SSF52374">
    <property type="entry name" value="Nucleotidylyl transferase"/>
    <property type="match status" value="1"/>
</dbReference>
<dbReference type="SUPFAM" id="SSF160113">
    <property type="entry name" value="YegP-like"/>
    <property type="match status" value="1"/>
</dbReference>
<keyword id="KW-0030">Aminoacyl-tRNA synthetase</keyword>
<keyword id="KW-0067">ATP-binding</keyword>
<keyword id="KW-0963">Cytoplasm</keyword>
<keyword id="KW-0436">Ligase</keyword>
<keyword id="KW-0547">Nucleotide-binding</keyword>
<keyword id="KW-0648">Protein biosynthesis</keyword>
<keyword id="KW-1185">Reference proteome</keyword>
<organism>
    <name type="scientific">Pseudomonas syringae pv. tomato (strain ATCC BAA-871 / DC3000)</name>
    <dbReference type="NCBI Taxonomy" id="223283"/>
    <lineage>
        <taxon>Bacteria</taxon>
        <taxon>Pseudomonadati</taxon>
        <taxon>Pseudomonadota</taxon>
        <taxon>Gammaproteobacteria</taxon>
        <taxon>Pseudomonadales</taxon>
        <taxon>Pseudomonadaceae</taxon>
        <taxon>Pseudomonas</taxon>
    </lineage>
</organism>
<accession>Q87WW4</accession>
<protein>
    <recommendedName>
        <fullName evidence="1">Tryptophan--tRNA ligase</fullName>
        <ecNumber evidence="1">6.1.1.2</ecNumber>
    </recommendedName>
    <alternativeName>
        <fullName evidence="1">Tryptophanyl-tRNA synthetase</fullName>
        <shortName evidence="1">TrpRS</shortName>
    </alternativeName>
</protein>
<gene>
    <name evidence="1" type="primary">trpS</name>
    <name type="ordered locus">PSPTO_4429</name>
</gene>
<comment type="function">
    <text evidence="1">Catalyzes the attachment of tryptophan to tRNA(Trp).</text>
</comment>
<comment type="catalytic activity">
    <reaction evidence="1">
        <text>tRNA(Trp) + L-tryptophan + ATP = L-tryptophyl-tRNA(Trp) + AMP + diphosphate + H(+)</text>
        <dbReference type="Rhea" id="RHEA:24080"/>
        <dbReference type="Rhea" id="RHEA-COMP:9671"/>
        <dbReference type="Rhea" id="RHEA-COMP:9705"/>
        <dbReference type="ChEBI" id="CHEBI:15378"/>
        <dbReference type="ChEBI" id="CHEBI:30616"/>
        <dbReference type="ChEBI" id="CHEBI:33019"/>
        <dbReference type="ChEBI" id="CHEBI:57912"/>
        <dbReference type="ChEBI" id="CHEBI:78442"/>
        <dbReference type="ChEBI" id="CHEBI:78535"/>
        <dbReference type="ChEBI" id="CHEBI:456215"/>
        <dbReference type="EC" id="6.1.1.2"/>
    </reaction>
</comment>
<comment type="subunit">
    <text evidence="1">Homodimer.</text>
</comment>
<comment type="subcellular location">
    <subcellularLocation>
        <location evidence="1">Cytoplasm</location>
    </subcellularLocation>
</comment>
<comment type="similarity">
    <text evidence="1">Belongs to the class-I aminoacyl-tRNA synthetase family.</text>
</comment>
<evidence type="ECO:0000255" key="1">
    <source>
        <dbReference type="HAMAP-Rule" id="MF_00140"/>
    </source>
</evidence>